<protein>
    <recommendedName>
        <fullName evidence="1">Elongation factor G</fullName>
        <shortName evidence="1">EF-G</shortName>
    </recommendedName>
</protein>
<evidence type="ECO:0000255" key="1">
    <source>
        <dbReference type="HAMAP-Rule" id="MF_00054"/>
    </source>
</evidence>
<proteinExistence type="inferred from homology"/>
<keyword id="KW-0963">Cytoplasm</keyword>
<keyword id="KW-0251">Elongation factor</keyword>
<keyword id="KW-0342">GTP-binding</keyword>
<keyword id="KW-0547">Nucleotide-binding</keyword>
<keyword id="KW-0648">Protein biosynthesis</keyword>
<accession>Q6FZB9</accession>
<comment type="function">
    <text evidence="1">Catalyzes the GTP-dependent ribosomal translocation step during translation elongation. During this step, the ribosome changes from the pre-translocational (PRE) to the post-translocational (POST) state as the newly formed A-site-bound peptidyl-tRNA and P-site-bound deacylated tRNA move to the P and E sites, respectively. Catalyzes the coordinated movement of the two tRNA molecules, the mRNA and conformational changes in the ribosome.</text>
</comment>
<comment type="subcellular location">
    <subcellularLocation>
        <location evidence="1">Cytoplasm</location>
    </subcellularLocation>
</comment>
<comment type="similarity">
    <text evidence="1">Belongs to the TRAFAC class translation factor GTPase superfamily. Classic translation factor GTPase family. EF-G/EF-2 subfamily.</text>
</comment>
<sequence>MAREYKIEDYRNFGIMAHIDAGKTTMTERILFYTGKNHKIGETHDGASTMDWMEQEQERGITITSAATTTFWKGPDGRKRRFNIIDTPGHVDFTIEVERSLRVLDGAIALLDANAGVEPQTETVWRQAEKYRVPRMVFVNKMDKIGADFYRSVEMVGSRLGAKALVLQLPIGAENDFEGVVDLVYMRALRWDGSIGAPATVSEIPSDLKEKAEEYREKLIEMAVEVDEVATESYLEGVMPTDEQLVALIRKGTIEVQFHPVLCGTAFKNKGVQPLLDAVISYLPSPVDVPAISGIDVKTEDEVTRESSDDAPLSMLAFKIMNDPFVGSLTFCRIYSGKVQKGISLENTVKKKRERLGRMLQMHSNSREDIEEAFAGDIVALAGLKETTTGDTLCDPLRPVVLERMEFPEPVIEIAIEPKTKADQEKMGIALNRLAAEDPSFRVKSDEESGQTIIAGMGELHLDIIVDRMRREFKVEANIGQPQVAYRESITKAAEIDYTHKKQSGGAGQFARVKIIFEPHDGDDFIFESKIVGGAVPKEYIPGVQKGIESVMGSGPLAGFPMLGVKATLVDGGYHDVDSSVLAFEIAARAAFRDGAKKAGAQLLEPIMKVEVVTPEDYVGDVIGDLNSRRGQISGTEARSVSTVVNAMVPLANMFGYVNSLRSMSQGRAQYTMQFDHYEPVPSAVALEIQKKYA</sequence>
<organism>
    <name type="scientific">Bartonella quintana (strain Toulouse)</name>
    <name type="common">Rochalimaea quintana</name>
    <dbReference type="NCBI Taxonomy" id="283165"/>
    <lineage>
        <taxon>Bacteria</taxon>
        <taxon>Pseudomonadati</taxon>
        <taxon>Pseudomonadota</taxon>
        <taxon>Alphaproteobacteria</taxon>
        <taxon>Hyphomicrobiales</taxon>
        <taxon>Bartonellaceae</taxon>
        <taxon>Bartonella</taxon>
    </lineage>
</organism>
<name>EFG_BARQU</name>
<gene>
    <name evidence="1" type="primary">fusA</name>
    <name type="ordered locus">BQ08260</name>
</gene>
<feature type="chain" id="PRO_0000091074" description="Elongation factor G">
    <location>
        <begin position="1"/>
        <end position="694"/>
    </location>
</feature>
<feature type="domain" description="tr-type G">
    <location>
        <begin position="8"/>
        <end position="287"/>
    </location>
</feature>
<feature type="binding site" evidence="1">
    <location>
        <begin position="17"/>
        <end position="24"/>
    </location>
    <ligand>
        <name>GTP</name>
        <dbReference type="ChEBI" id="CHEBI:37565"/>
    </ligand>
</feature>
<feature type="binding site" evidence="1">
    <location>
        <begin position="86"/>
        <end position="90"/>
    </location>
    <ligand>
        <name>GTP</name>
        <dbReference type="ChEBI" id="CHEBI:37565"/>
    </ligand>
</feature>
<feature type="binding site" evidence="1">
    <location>
        <begin position="140"/>
        <end position="143"/>
    </location>
    <ligand>
        <name>GTP</name>
        <dbReference type="ChEBI" id="CHEBI:37565"/>
    </ligand>
</feature>
<reference key="1">
    <citation type="journal article" date="2004" name="Proc. Natl. Acad. Sci. U.S.A.">
        <title>The louse-borne human pathogen Bartonella quintana is a genomic derivative of the zoonotic agent Bartonella henselae.</title>
        <authorList>
            <person name="Alsmark U.C.M."/>
            <person name="Frank A.C."/>
            <person name="Karlberg E.O."/>
            <person name="Legault B.-A."/>
            <person name="Ardell D.H."/>
            <person name="Canbaeck B."/>
            <person name="Eriksson A.-S."/>
            <person name="Naeslund A.K."/>
            <person name="Handley S.A."/>
            <person name="Huvet M."/>
            <person name="La Scola B."/>
            <person name="Holmberg M."/>
            <person name="Andersson S.G.E."/>
        </authorList>
    </citation>
    <scope>NUCLEOTIDE SEQUENCE [LARGE SCALE GENOMIC DNA]</scope>
    <source>
        <strain>Toulouse</strain>
    </source>
</reference>
<dbReference type="EMBL" id="BX897700">
    <property type="protein sequence ID" value="CAF26309.1"/>
    <property type="molecule type" value="Genomic_DNA"/>
</dbReference>
<dbReference type="RefSeq" id="WP_011179554.1">
    <property type="nucleotide sequence ID" value="NC_005955.1"/>
</dbReference>
<dbReference type="SMR" id="Q6FZB9"/>
<dbReference type="KEGG" id="bqu:BQ08260"/>
<dbReference type="eggNOG" id="COG0480">
    <property type="taxonomic scope" value="Bacteria"/>
</dbReference>
<dbReference type="HOGENOM" id="CLU_002794_4_1_5"/>
<dbReference type="OrthoDB" id="9802948at2"/>
<dbReference type="Proteomes" id="UP000000597">
    <property type="component" value="Chromosome"/>
</dbReference>
<dbReference type="GO" id="GO:0005737">
    <property type="term" value="C:cytoplasm"/>
    <property type="evidence" value="ECO:0007669"/>
    <property type="project" value="UniProtKB-SubCell"/>
</dbReference>
<dbReference type="GO" id="GO:0005525">
    <property type="term" value="F:GTP binding"/>
    <property type="evidence" value="ECO:0007669"/>
    <property type="project" value="UniProtKB-UniRule"/>
</dbReference>
<dbReference type="GO" id="GO:0003924">
    <property type="term" value="F:GTPase activity"/>
    <property type="evidence" value="ECO:0007669"/>
    <property type="project" value="InterPro"/>
</dbReference>
<dbReference type="GO" id="GO:0097216">
    <property type="term" value="F:guanosine tetraphosphate binding"/>
    <property type="evidence" value="ECO:0007669"/>
    <property type="project" value="UniProtKB-ARBA"/>
</dbReference>
<dbReference type="GO" id="GO:0003746">
    <property type="term" value="F:translation elongation factor activity"/>
    <property type="evidence" value="ECO:0007669"/>
    <property type="project" value="UniProtKB-UniRule"/>
</dbReference>
<dbReference type="GO" id="GO:0032790">
    <property type="term" value="P:ribosome disassembly"/>
    <property type="evidence" value="ECO:0007669"/>
    <property type="project" value="TreeGrafter"/>
</dbReference>
<dbReference type="CDD" id="cd01886">
    <property type="entry name" value="EF-G"/>
    <property type="match status" value="1"/>
</dbReference>
<dbReference type="CDD" id="cd16262">
    <property type="entry name" value="EFG_III"/>
    <property type="match status" value="1"/>
</dbReference>
<dbReference type="CDD" id="cd01434">
    <property type="entry name" value="EFG_mtEFG1_IV"/>
    <property type="match status" value="1"/>
</dbReference>
<dbReference type="CDD" id="cd03713">
    <property type="entry name" value="EFG_mtEFG_C"/>
    <property type="match status" value="1"/>
</dbReference>
<dbReference type="CDD" id="cd04088">
    <property type="entry name" value="EFG_mtEFG_II"/>
    <property type="match status" value="1"/>
</dbReference>
<dbReference type="FunFam" id="2.40.30.10:FF:000006">
    <property type="entry name" value="Elongation factor G"/>
    <property type="match status" value="1"/>
</dbReference>
<dbReference type="FunFam" id="3.30.230.10:FF:000003">
    <property type="entry name" value="Elongation factor G"/>
    <property type="match status" value="1"/>
</dbReference>
<dbReference type="FunFam" id="3.30.70.240:FF:000001">
    <property type="entry name" value="Elongation factor G"/>
    <property type="match status" value="1"/>
</dbReference>
<dbReference type="FunFam" id="3.30.70.870:FF:000001">
    <property type="entry name" value="Elongation factor G"/>
    <property type="match status" value="1"/>
</dbReference>
<dbReference type="FunFam" id="3.40.50.300:FF:000029">
    <property type="entry name" value="Elongation factor G"/>
    <property type="match status" value="1"/>
</dbReference>
<dbReference type="Gene3D" id="3.30.230.10">
    <property type="match status" value="1"/>
</dbReference>
<dbReference type="Gene3D" id="3.30.70.240">
    <property type="match status" value="1"/>
</dbReference>
<dbReference type="Gene3D" id="3.30.70.870">
    <property type="entry name" value="Elongation Factor G (Translational Gtpase), domain 3"/>
    <property type="match status" value="1"/>
</dbReference>
<dbReference type="Gene3D" id="3.40.50.300">
    <property type="entry name" value="P-loop containing nucleotide triphosphate hydrolases"/>
    <property type="match status" value="1"/>
</dbReference>
<dbReference type="Gene3D" id="2.40.30.10">
    <property type="entry name" value="Translation factors"/>
    <property type="match status" value="1"/>
</dbReference>
<dbReference type="HAMAP" id="MF_00054_B">
    <property type="entry name" value="EF_G_EF_2_B"/>
    <property type="match status" value="1"/>
</dbReference>
<dbReference type="InterPro" id="IPR041095">
    <property type="entry name" value="EFG_II"/>
</dbReference>
<dbReference type="InterPro" id="IPR009022">
    <property type="entry name" value="EFG_III"/>
</dbReference>
<dbReference type="InterPro" id="IPR035647">
    <property type="entry name" value="EFG_III/V"/>
</dbReference>
<dbReference type="InterPro" id="IPR047872">
    <property type="entry name" value="EFG_IV"/>
</dbReference>
<dbReference type="InterPro" id="IPR035649">
    <property type="entry name" value="EFG_V"/>
</dbReference>
<dbReference type="InterPro" id="IPR000640">
    <property type="entry name" value="EFG_V-like"/>
</dbReference>
<dbReference type="InterPro" id="IPR004161">
    <property type="entry name" value="EFTu-like_2"/>
</dbReference>
<dbReference type="InterPro" id="IPR031157">
    <property type="entry name" value="G_TR_CS"/>
</dbReference>
<dbReference type="InterPro" id="IPR027417">
    <property type="entry name" value="P-loop_NTPase"/>
</dbReference>
<dbReference type="InterPro" id="IPR020568">
    <property type="entry name" value="Ribosomal_Su5_D2-typ_SF"/>
</dbReference>
<dbReference type="InterPro" id="IPR014721">
    <property type="entry name" value="Ribsml_uS5_D2-typ_fold_subgr"/>
</dbReference>
<dbReference type="InterPro" id="IPR005225">
    <property type="entry name" value="Small_GTP-bd"/>
</dbReference>
<dbReference type="InterPro" id="IPR000795">
    <property type="entry name" value="T_Tr_GTP-bd_dom"/>
</dbReference>
<dbReference type="InterPro" id="IPR009000">
    <property type="entry name" value="Transl_B-barrel_sf"/>
</dbReference>
<dbReference type="InterPro" id="IPR004540">
    <property type="entry name" value="Transl_elong_EFG/EF2"/>
</dbReference>
<dbReference type="InterPro" id="IPR005517">
    <property type="entry name" value="Transl_elong_EFG/EF2_IV"/>
</dbReference>
<dbReference type="NCBIfam" id="TIGR00484">
    <property type="entry name" value="EF-G"/>
    <property type="match status" value="1"/>
</dbReference>
<dbReference type="NCBIfam" id="NF009381">
    <property type="entry name" value="PRK12740.1-5"/>
    <property type="match status" value="1"/>
</dbReference>
<dbReference type="NCBIfam" id="TIGR00231">
    <property type="entry name" value="small_GTP"/>
    <property type="match status" value="1"/>
</dbReference>
<dbReference type="PANTHER" id="PTHR43261:SF1">
    <property type="entry name" value="RIBOSOME-RELEASING FACTOR 2, MITOCHONDRIAL"/>
    <property type="match status" value="1"/>
</dbReference>
<dbReference type="PANTHER" id="PTHR43261">
    <property type="entry name" value="TRANSLATION ELONGATION FACTOR G-RELATED"/>
    <property type="match status" value="1"/>
</dbReference>
<dbReference type="Pfam" id="PF00679">
    <property type="entry name" value="EFG_C"/>
    <property type="match status" value="1"/>
</dbReference>
<dbReference type="Pfam" id="PF14492">
    <property type="entry name" value="EFG_III"/>
    <property type="match status" value="1"/>
</dbReference>
<dbReference type="Pfam" id="PF03764">
    <property type="entry name" value="EFG_IV"/>
    <property type="match status" value="1"/>
</dbReference>
<dbReference type="Pfam" id="PF00009">
    <property type="entry name" value="GTP_EFTU"/>
    <property type="match status" value="1"/>
</dbReference>
<dbReference type="Pfam" id="PF03144">
    <property type="entry name" value="GTP_EFTU_D2"/>
    <property type="match status" value="1"/>
</dbReference>
<dbReference type="PRINTS" id="PR00315">
    <property type="entry name" value="ELONGATNFCT"/>
</dbReference>
<dbReference type="SMART" id="SM00838">
    <property type="entry name" value="EFG_C"/>
    <property type="match status" value="1"/>
</dbReference>
<dbReference type="SMART" id="SM00889">
    <property type="entry name" value="EFG_IV"/>
    <property type="match status" value="1"/>
</dbReference>
<dbReference type="SUPFAM" id="SSF54980">
    <property type="entry name" value="EF-G C-terminal domain-like"/>
    <property type="match status" value="2"/>
</dbReference>
<dbReference type="SUPFAM" id="SSF52540">
    <property type="entry name" value="P-loop containing nucleoside triphosphate hydrolases"/>
    <property type="match status" value="1"/>
</dbReference>
<dbReference type="SUPFAM" id="SSF54211">
    <property type="entry name" value="Ribosomal protein S5 domain 2-like"/>
    <property type="match status" value="1"/>
</dbReference>
<dbReference type="SUPFAM" id="SSF50447">
    <property type="entry name" value="Translation proteins"/>
    <property type="match status" value="1"/>
</dbReference>
<dbReference type="PROSITE" id="PS00301">
    <property type="entry name" value="G_TR_1"/>
    <property type="match status" value="1"/>
</dbReference>
<dbReference type="PROSITE" id="PS51722">
    <property type="entry name" value="G_TR_2"/>
    <property type="match status" value="1"/>
</dbReference>